<name>RS20_CORJK</name>
<organism>
    <name type="scientific">Corynebacterium jeikeium (strain K411)</name>
    <dbReference type="NCBI Taxonomy" id="306537"/>
    <lineage>
        <taxon>Bacteria</taxon>
        <taxon>Bacillati</taxon>
        <taxon>Actinomycetota</taxon>
        <taxon>Actinomycetes</taxon>
        <taxon>Mycobacteriales</taxon>
        <taxon>Corynebacteriaceae</taxon>
        <taxon>Corynebacterium</taxon>
    </lineage>
</organism>
<accession>Q4JWS3</accession>
<evidence type="ECO:0000255" key="1">
    <source>
        <dbReference type="HAMAP-Rule" id="MF_00500"/>
    </source>
</evidence>
<evidence type="ECO:0000305" key="2"/>
<keyword id="KW-1185">Reference proteome</keyword>
<keyword id="KW-0687">Ribonucleoprotein</keyword>
<keyword id="KW-0689">Ribosomal protein</keyword>
<keyword id="KW-0694">RNA-binding</keyword>
<keyword id="KW-0699">rRNA-binding</keyword>
<comment type="function">
    <text evidence="1">Binds directly to 16S ribosomal RNA.</text>
</comment>
<comment type="similarity">
    <text evidence="1">Belongs to the bacterial ribosomal protein bS20 family.</text>
</comment>
<sequence>MANIKQQKKRVLTNEIARKRNQAIRSRLRTETRKFNAAVEAGDKEAAEAQLRVASRFYDKAVTKGTIHRNNAANKKSGMAARFNKMA</sequence>
<gene>
    <name evidence="1" type="primary">rpsT</name>
    <name type="ordered locus">jk0575</name>
</gene>
<proteinExistence type="inferred from homology"/>
<protein>
    <recommendedName>
        <fullName evidence="1">Small ribosomal subunit protein bS20</fullName>
    </recommendedName>
    <alternativeName>
        <fullName evidence="2">30S ribosomal protein S20</fullName>
    </alternativeName>
</protein>
<reference key="1">
    <citation type="journal article" date="2005" name="J. Bacteriol.">
        <title>Complete genome sequence and analysis of the multiresistant nosocomial pathogen Corynebacterium jeikeium K411, a lipid-requiring bacterium of the human skin flora.</title>
        <authorList>
            <person name="Tauch A."/>
            <person name="Kaiser O."/>
            <person name="Hain T."/>
            <person name="Goesmann A."/>
            <person name="Weisshaar B."/>
            <person name="Albersmeier A."/>
            <person name="Bekel T."/>
            <person name="Bischoff N."/>
            <person name="Brune I."/>
            <person name="Chakraborty T."/>
            <person name="Kalinowski J."/>
            <person name="Meyer F."/>
            <person name="Rupp O."/>
            <person name="Schneiker S."/>
            <person name="Viehoever P."/>
            <person name="Puehler A."/>
        </authorList>
    </citation>
    <scope>NUCLEOTIDE SEQUENCE [LARGE SCALE GENOMIC DNA]</scope>
    <source>
        <strain>K411</strain>
    </source>
</reference>
<feature type="chain" id="PRO_0000224962" description="Small ribosomal subunit protein bS20">
    <location>
        <begin position="1"/>
        <end position="87"/>
    </location>
</feature>
<dbReference type="EMBL" id="CR931997">
    <property type="protein sequence ID" value="CAI36734.1"/>
    <property type="molecule type" value="Genomic_DNA"/>
</dbReference>
<dbReference type="RefSeq" id="WP_005296442.1">
    <property type="nucleotide sequence ID" value="NC_007164.1"/>
</dbReference>
<dbReference type="SMR" id="Q4JWS3"/>
<dbReference type="STRING" id="306537.jk0575"/>
<dbReference type="GeneID" id="92738078"/>
<dbReference type="KEGG" id="cjk:jk0575"/>
<dbReference type="eggNOG" id="COG0268">
    <property type="taxonomic scope" value="Bacteria"/>
</dbReference>
<dbReference type="HOGENOM" id="CLU_160655_0_1_11"/>
<dbReference type="OrthoDB" id="9807974at2"/>
<dbReference type="Proteomes" id="UP000000545">
    <property type="component" value="Chromosome"/>
</dbReference>
<dbReference type="GO" id="GO:0005829">
    <property type="term" value="C:cytosol"/>
    <property type="evidence" value="ECO:0007669"/>
    <property type="project" value="TreeGrafter"/>
</dbReference>
<dbReference type="GO" id="GO:0015935">
    <property type="term" value="C:small ribosomal subunit"/>
    <property type="evidence" value="ECO:0007669"/>
    <property type="project" value="TreeGrafter"/>
</dbReference>
<dbReference type="GO" id="GO:0070181">
    <property type="term" value="F:small ribosomal subunit rRNA binding"/>
    <property type="evidence" value="ECO:0007669"/>
    <property type="project" value="TreeGrafter"/>
</dbReference>
<dbReference type="GO" id="GO:0003735">
    <property type="term" value="F:structural constituent of ribosome"/>
    <property type="evidence" value="ECO:0007669"/>
    <property type="project" value="InterPro"/>
</dbReference>
<dbReference type="GO" id="GO:0006412">
    <property type="term" value="P:translation"/>
    <property type="evidence" value="ECO:0007669"/>
    <property type="project" value="UniProtKB-UniRule"/>
</dbReference>
<dbReference type="FunFam" id="1.20.58.110:FF:000001">
    <property type="entry name" value="30S ribosomal protein S20"/>
    <property type="match status" value="1"/>
</dbReference>
<dbReference type="Gene3D" id="1.20.58.110">
    <property type="entry name" value="Ribosomal protein S20"/>
    <property type="match status" value="1"/>
</dbReference>
<dbReference type="HAMAP" id="MF_00500">
    <property type="entry name" value="Ribosomal_bS20"/>
    <property type="match status" value="1"/>
</dbReference>
<dbReference type="InterPro" id="IPR002583">
    <property type="entry name" value="Ribosomal_bS20"/>
</dbReference>
<dbReference type="InterPro" id="IPR036510">
    <property type="entry name" value="Ribosomal_bS20_sf"/>
</dbReference>
<dbReference type="NCBIfam" id="TIGR00029">
    <property type="entry name" value="S20"/>
    <property type="match status" value="1"/>
</dbReference>
<dbReference type="PANTHER" id="PTHR33398">
    <property type="entry name" value="30S RIBOSOMAL PROTEIN S20"/>
    <property type="match status" value="1"/>
</dbReference>
<dbReference type="PANTHER" id="PTHR33398:SF1">
    <property type="entry name" value="SMALL RIBOSOMAL SUBUNIT PROTEIN BS20C"/>
    <property type="match status" value="1"/>
</dbReference>
<dbReference type="Pfam" id="PF01649">
    <property type="entry name" value="Ribosomal_S20p"/>
    <property type="match status" value="1"/>
</dbReference>
<dbReference type="SUPFAM" id="SSF46992">
    <property type="entry name" value="Ribosomal protein S20"/>
    <property type="match status" value="1"/>
</dbReference>